<reference key="1">
    <citation type="journal article" date="2006" name="Lancet">
        <title>Complete genome sequence of USA300, an epidemic clone of community-acquired meticillin-resistant Staphylococcus aureus.</title>
        <authorList>
            <person name="Diep B.A."/>
            <person name="Gill S.R."/>
            <person name="Chang R.F."/>
            <person name="Phan T.H."/>
            <person name="Chen J.H."/>
            <person name="Davidson M.G."/>
            <person name="Lin F."/>
            <person name="Lin J."/>
            <person name="Carleton H.A."/>
            <person name="Mongodin E.F."/>
            <person name="Sensabaugh G.F."/>
            <person name="Perdreau-Remington F."/>
        </authorList>
    </citation>
    <scope>NUCLEOTIDE SEQUENCE [LARGE SCALE GENOMIC DNA]</scope>
    <source>
        <strain>USA300</strain>
    </source>
</reference>
<accession>Q2FEN5</accession>
<gene>
    <name evidence="1" type="primary">topB</name>
    <name type="ordered locus">SAUSA300_2208</name>
</gene>
<protein>
    <recommendedName>
        <fullName evidence="1">DNA topoisomerase 3</fullName>
        <ecNumber evidence="1">5.6.2.1</ecNumber>
    </recommendedName>
    <alternativeName>
        <fullName evidence="1">DNA topoisomerase III</fullName>
    </alternativeName>
</protein>
<comment type="function">
    <text evidence="1">Releases the supercoiling and torsional tension of DNA, which is introduced during the DNA replication and transcription, by transiently cleaving and rejoining one strand of the DNA duplex. Introduces a single-strand break via transesterification at a target site in duplex DNA. The scissile phosphodiester is attacked by the catalytic tyrosine of the enzyme, resulting in the formation of a DNA-(5'-phosphotyrosyl)-enzyme intermediate and the expulsion of a 3'-OH DNA strand. The free DNA strand then undergoes passage around the unbroken strand, thus removing DNA supercoils. Finally, in the religation step, the DNA 3'-OH attacks the covalent intermediate to expel the active-site tyrosine and restore the DNA phosphodiester backbone.</text>
</comment>
<comment type="catalytic activity">
    <reaction evidence="1">
        <text>ATP-independent breakage of single-stranded DNA, followed by passage and rejoining.</text>
        <dbReference type="EC" id="5.6.2.1"/>
    </reaction>
</comment>
<comment type="cofactor">
    <cofactor evidence="1">
        <name>Mg(2+)</name>
        <dbReference type="ChEBI" id="CHEBI:18420"/>
    </cofactor>
</comment>
<comment type="similarity">
    <text evidence="1 2">Belongs to the type IA topoisomerase family.</text>
</comment>
<keyword id="KW-0238">DNA-binding</keyword>
<keyword id="KW-0413">Isomerase</keyword>
<keyword id="KW-0460">Magnesium</keyword>
<keyword id="KW-0479">Metal-binding</keyword>
<keyword id="KW-0799">Topoisomerase</keyword>
<sequence length="711" mass="81524">MKSLILAEKPSVARDIADALQINQKRNGYFENNQYIVTWALGHLVTNATPEQYDKNLKEWRLEDLPIIPKYMKTVVIGKTSKQFKTVKALILDNKVKDIIIATDAGREGELVARLILDKVGNKKPIRRLWISSVTKKAIQQGFKNLKDGRQYNDLYYAALARSEADWIVGINATRALTTKYDAQLSLGRVQTPTIQLVNTRQQEINQFKPQQYFTLSLTVKGFDFQLESNQRYTNKETLEQMVNNLKNVDGKIKSVATKHKKSYPQSLYNLTDLQQDMYRRYKIGPKETLNTLQSLYERHKVVTYPRTDSNYLTTDMVDTMKERIQATMATTYKDQARPLMSKTFSSKMSIFNNQKVSDHHAIIPTEVRPVMSDLSNRELKLYDMIVERFLEALMPPHEYDAITVTLEVAGHTFVLKENVTTVLGFKSIRQGESITEMQQPFSEGDEVKISKTNIREHETTPPEYFNEGSLLKAMENPQNFIQLKDKKYAQTLKQTGGIGTVATRADIIDKLFNMNAIESRDGKIKVTSKGKQILELAPEELTSPLLTAQWEEKLLLIERGKYQAKTFINEMKDFTKDVVNGIKNSDRKYKHDNLTTTECPTCGKFMIKVKTKNGQMLVCQDPSCKTKKNVQRKTNARCPNCKKKLTLFGKGKEAVYRCVCGHSETQAHMDQRMKSKSSGKVSRKEMKKYMNKNEGLDNNPFKDALKNLNL</sequence>
<feature type="chain" id="PRO_0000286367" description="DNA topoisomerase 3">
    <location>
        <begin position="1"/>
        <end position="711"/>
    </location>
</feature>
<feature type="domain" description="Toprim" evidence="1">
    <location>
        <begin position="2"/>
        <end position="135"/>
    </location>
</feature>
<feature type="domain" description="Topo IA-type catalytic" evidence="2">
    <location>
        <begin position="152"/>
        <end position="580"/>
    </location>
</feature>
<feature type="region of interest" description="Interaction with DNA" evidence="1">
    <location>
        <begin position="186"/>
        <end position="191"/>
    </location>
</feature>
<feature type="region of interest" description="Disordered" evidence="3">
    <location>
        <begin position="691"/>
        <end position="711"/>
    </location>
</feature>
<feature type="active site" description="O-(5'-phospho-DNA)-tyrosine intermediate" evidence="2">
    <location>
        <position position="305"/>
    </location>
</feature>
<feature type="binding site" evidence="1">
    <location>
        <position position="8"/>
    </location>
    <ligand>
        <name>Mg(2+)</name>
        <dbReference type="ChEBI" id="CHEBI:18420"/>
        <note>catalytic</note>
    </ligand>
</feature>
<feature type="binding site" evidence="1">
    <location>
        <position position="104"/>
    </location>
    <ligand>
        <name>Mg(2+)</name>
        <dbReference type="ChEBI" id="CHEBI:18420"/>
        <note>catalytic</note>
    </ligand>
</feature>
<feature type="site" description="Interaction with DNA" evidence="1">
    <location>
        <position position="60"/>
    </location>
</feature>
<feature type="site" description="Interaction with DNA" evidence="1">
    <location>
        <position position="167"/>
    </location>
</feature>
<feature type="site" description="Interaction with DNA" evidence="1">
    <location>
        <position position="175"/>
    </location>
</feature>
<feature type="site" description="Interaction with DNA" evidence="1">
    <location>
        <position position="307"/>
    </location>
</feature>
<organism>
    <name type="scientific">Staphylococcus aureus (strain USA300)</name>
    <dbReference type="NCBI Taxonomy" id="367830"/>
    <lineage>
        <taxon>Bacteria</taxon>
        <taxon>Bacillati</taxon>
        <taxon>Bacillota</taxon>
        <taxon>Bacilli</taxon>
        <taxon>Bacillales</taxon>
        <taxon>Staphylococcaceae</taxon>
        <taxon>Staphylococcus</taxon>
    </lineage>
</organism>
<evidence type="ECO:0000255" key="1">
    <source>
        <dbReference type="HAMAP-Rule" id="MF_00953"/>
    </source>
</evidence>
<evidence type="ECO:0000255" key="2">
    <source>
        <dbReference type="PROSITE-ProRule" id="PRU01383"/>
    </source>
</evidence>
<evidence type="ECO:0000256" key="3">
    <source>
        <dbReference type="SAM" id="MobiDB-lite"/>
    </source>
</evidence>
<proteinExistence type="inferred from homology"/>
<name>TOP3_STAA3</name>
<dbReference type="EC" id="5.6.2.1" evidence="1"/>
<dbReference type="EMBL" id="CP000255">
    <property type="protein sequence ID" value="ABD21681.1"/>
    <property type="molecule type" value="Genomic_DNA"/>
</dbReference>
<dbReference type="RefSeq" id="WP_000838479.1">
    <property type="nucleotide sequence ID" value="NZ_CP027476.1"/>
</dbReference>
<dbReference type="SMR" id="Q2FEN5"/>
<dbReference type="KEGG" id="saa:SAUSA300_2208"/>
<dbReference type="HOGENOM" id="CLU_002929_5_2_9"/>
<dbReference type="OMA" id="VIHNVYS"/>
<dbReference type="Proteomes" id="UP000001939">
    <property type="component" value="Chromosome"/>
</dbReference>
<dbReference type="GO" id="GO:0043597">
    <property type="term" value="C:cytoplasmic replication fork"/>
    <property type="evidence" value="ECO:0007669"/>
    <property type="project" value="TreeGrafter"/>
</dbReference>
<dbReference type="GO" id="GO:0003677">
    <property type="term" value="F:DNA binding"/>
    <property type="evidence" value="ECO:0007669"/>
    <property type="project" value="UniProtKB-KW"/>
</dbReference>
<dbReference type="GO" id="GO:0003917">
    <property type="term" value="F:DNA topoisomerase type I (single strand cut, ATP-independent) activity"/>
    <property type="evidence" value="ECO:0007669"/>
    <property type="project" value="UniProtKB-UniRule"/>
</dbReference>
<dbReference type="GO" id="GO:0000287">
    <property type="term" value="F:magnesium ion binding"/>
    <property type="evidence" value="ECO:0007669"/>
    <property type="project" value="UniProtKB-UniRule"/>
</dbReference>
<dbReference type="GO" id="GO:0006310">
    <property type="term" value="P:DNA recombination"/>
    <property type="evidence" value="ECO:0007669"/>
    <property type="project" value="TreeGrafter"/>
</dbReference>
<dbReference type="GO" id="GO:0006281">
    <property type="term" value="P:DNA repair"/>
    <property type="evidence" value="ECO:0007669"/>
    <property type="project" value="TreeGrafter"/>
</dbReference>
<dbReference type="GO" id="GO:0006265">
    <property type="term" value="P:DNA topological change"/>
    <property type="evidence" value="ECO:0007669"/>
    <property type="project" value="UniProtKB-UniRule"/>
</dbReference>
<dbReference type="CDD" id="cd00186">
    <property type="entry name" value="TOP1Ac"/>
    <property type="match status" value="1"/>
</dbReference>
<dbReference type="CDD" id="cd03362">
    <property type="entry name" value="TOPRIM_TopoIA_TopoIII"/>
    <property type="match status" value="1"/>
</dbReference>
<dbReference type="Gene3D" id="3.40.50.140">
    <property type="match status" value="1"/>
</dbReference>
<dbReference type="Gene3D" id="1.10.460.10">
    <property type="entry name" value="Topoisomerase I, domain 2"/>
    <property type="match status" value="1"/>
</dbReference>
<dbReference type="Gene3D" id="2.70.20.10">
    <property type="entry name" value="Topoisomerase I, domain 3"/>
    <property type="match status" value="1"/>
</dbReference>
<dbReference type="Gene3D" id="1.10.290.10">
    <property type="entry name" value="Topoisomerase I, domain 4"/>
    <property type="match status" value="1"/>
</dbReference>
<dbReference type="HAMAP" id="MF_00953">
    <property type="entry name" value="Topoisom_3_prok"/>
    <property type="match status" value="1"/>
</dbReference>
<dbReference type="InterPro" id="IPR000380">
    <property type="entry name" value="Topo_IA"/>
</dbReference>
<dbReference type="InterPro" id="IPR003601">
    <property type="entry name" value="Topo_IA_2"/>
</dbReference>
<dbReference type="InterPro" id="IPR023406">
    <property type="entry name" value="Topo_IA_AS"/>
</dbReference>
<dbReference type="InterPro" id="IPR013497">
    <property type="entry name" value="Topo_IA_cen"/>
</dbReference>
<dbReference type="InterPro" id="IPR013824">
    <property type="entry name" value="Topo_IA_cen_sub1"/>
</dbReference>
<dbReference type="InterPro" id="IPR013825">
    <property type="entry name" value="Topo_IA_cen_sub2"/>
</dbReference>
<dbReference type="InterPro" id="IPR013826">
    <property type="entry name" value="Topo_IA_cen_sub3"/>
</dbReference>
<dbReference type="InterPro" id="IPR023405">
    <property type="entry name" value="Topo_IA_core_domain"/>
</dbReference>
<dbReference type="InterPro" id="IPR003602">
    <property type="entry name" value="Topo_IA_DNA-bd_dom"/>
</dbReference>
<dbReference type="InterPro" id="IPR005738">
    <property type="entry name" value="TopoIII"/>
</dbReference>
<dbReference type="InterPro" id="IPR006171">
    <property type="entry name" value="TOPRIM_dom"/>
</dbReference>
<dbReference type="InterPro" id="IPR034144">
    <property type="entry name" value="TOPRIM_TopoIII"/>
</dbReference>
<dbReference type="NCBIfam" id="NF005829">
    <property type="entry name" value="PRK07726.1"/>
    <property type="match status" value="1"/>
</dbReference>
<dbReference type="NCBIfam" id="TIGR01056">
    <property type="entry name" value="topB"/>
    <property type="match status" value="1"/>
</dbReference>
<dbReference type="PANTHER" id="PTHR11390:SF21">
    <property type="entry name" value="DNA TOPOISOMERASE 3-ALPHA"/>
    <property type="match status" value="1"/>
</dbReference>
<dbReference type="PANTHER" id="PTHR11390">
    <property type="entry name" value="PROKARYOTIC DNA TOPOISOMERASE"/>
    <property type="match status" value="1"/>
</dbReference>
<dbReference type="Pfam" id="PF01131">
    <property type="entry name" value="Topoisom_bac"/>
    <property type="match status" value="1"/>
</dbReference>
<dbReference type="Pfam" id="PF01751">
    <property type="entry name" value="Toprim"/>
    <property type="match status" value="1"/>
</dbReference>
<dbReference type="PRINTS" id="PR00417">
    <property type="entry name" value="PRTPISMRASEI"/>
</dbReference>
<dbReference type="SMART" id="SM00437">
    <property type="entry name" value="TOP1Ac"/>
    <property type="match status" value="1"/>
</dbReference>
<dbReference type="SMART" id="SM00436">
    <property type="entry name" value="TOP1Bc"/>
    <property type="match status" value="1"/>
</dbReference>
<dbReference type="SMART" id="SM00493">
    <property type="entry name" value="TOPRIM"/>
    <property type="match status" value="1"/>
</dbReference>
<dbReference type="SUPFAM" id="SSF56712">
    <property type="entry name" value="Prokaryotic type I DNA topoisomerase"/>
    <property type="match status" value="1"/>
</dbReference>
<dbReference type="PROSITE" id="PS00396">
    <property type="entry name" value="TOPO_IA_1"/>
    <property type="match status" value="1"/>
</dbReference>
<dbReference type="PROSITE" id="PS52039">
    <property type="entry name" value="TOPO_IA_2"/>
    <property type="match status" value="1"/>
</dbReference>
<dbReference type="PROSITE" id="PS50880">
    <property type="entry name" value="TOPRIM"/>
    <property type="match status" value="1"/>
</dbReference>